<name>CYCP_HALH2</name>
<sequence>AEPEDAIHYRQSALSVMGWQMGPMGAMAQGDIEYDADEFATRANNLAAVAHLPWEGFTEGTLQGDDHGVETDALADIGDDWEGFEERQETFKQEAATLAQMVDDGEEFSALRRQVGAVGKSCKGCHDDFRAE</sequence>
<reference key="1">
    <citation type="journal article" date="1981" name="Proc. Natl. Acad. Sci. U.S.A.">
        <title>Amino acid sequences of bacterial cytochromes c' and c-556.</title>
        <authorList>
            <person name="Ambler R.P."/>
            <person name="Bartsch R.G."/>
            <person name="Daniel M."/>
            <person name="Kamen M.D."/>
            <person name="McLellan L."/>
            <person name="Meyer T.E."/>
            <person name="van Beeumen J."/>
        </authorList>
    </citation>
    <scope>PROTEIN SEQUENCE</scope>
</reference>
<reference key="2">
    <citation type="journal article" date="1987" name="Biochem. J.">
        <title>Amino acid sequences of cytochrome c-554(548) and cytochrome c' from a halophilic denitrifying bacterium of the genus Paracoccus.</title>
        <authorList>
            <person name="Ambler R.P."/>
            <person name="Daniel M."/>
            <person name="McLellan L."/>
            <person name="Meyer T.E."/>
            <person name="Cusanovich M.A."/>
            <person name="Kamen M.D."/>
        </authorList>
    </citation>
    <scope>PROTEIN SEQUENCE</scope>
    <source>
        <strain>ATCC 12084</strain>
    </source>
</reference>
<accession>P00143</accession>
<evidence type="ECO:0000250" key="1">
    <source>
        <dbReference type="UniProtKB" id="P00138"/>
    </source>
</evidence>
<keyword id="KW-0903">Direct protein sequencing</keyword>
<keyword id="KW-0249">Electron transport</keyword>
<keyword id="KW-0349">Heme</keyword>
<keyword id="KW-0408">Iron</keyword>
<keyword id="KW-0479">Metal-binding</keyword>
<keyword id="KW-0813">Transport</keyword>
<proteinExistence type="evidence at protein level"/>
<organism>
    <name type="scientific">Halomonas halodenitrificans (strain ATCC 12084 / NCIMB 8669)</name>
    <name type="common">Paracoccus halodenitrificans</name>
    <dbReference type="NCBI Taxonomy" id="31991"/>
    <lineage>
        <taxon>Bacteria</taxon>
        <taxon>Pseudomonadati</taxon>
        <taxon>Pseudomonadota</taxon>
        <taxon>Gammaproteobacteria</taxon>
        <taxon>Oceanospirillales</taxon>
        <taxon>Halomonadaceae</taxon>
        <taxon>Halomonas</taxon>
    </lineage>
</organism>
<dbReference type="SMR" id="P00143"/>
<dbReference type="GO" id="GO:0042597">
    <property type="term" value="C:periplasmic space"/>
    <property type="evidence" value="ECO:0007669"/>
    <property type="project" value="InterPro"/>
</dbReference>
<dbReference type="GO" id="GO:0009055">
    <property type="term" value="F:electron transfer activity"/>
    <property type="evidence" value="ECO:0007669"/>
    <property type="project" value="InterPro"/>
</dbReference>
<dbReference type="GO" id="GO:0020037">
    <property type="term" value="F:heme binding"/>
    <property type="evidence" value="ECO:0007669"/>
    <property type="project" value="InterPro"/>
</dbReference>
<dbReference type="GO" id="GO:0005506">
    <property type="term" value="F:iron ion binding"/>
    <property type="evidence" value="ECO:0007669"/>
    <property type="project" value="InterPro"/>
</dbReference>
<dbReference type="GO" id="GO:0022900">
    <property type="term" value="P:electron transport chain"/>
    <property type="evidence" value="ECO:0007669"/>
    <property type="project" value="InterPro"/>
</dbReference>
<dbReference type="Gene3D" id="1.20.120.10">
    <property type="entry name" value="Cytochrome c/b562"/>
    <property type="match status" value="1"/>
</dbReference>
<dbReference type="InterPro" id="IPR010980">
    <property type="entry name" value="Cyt_c/b562"/>
</dbReference>
<dbReference type="InterPro" id="IPR002321">
    <property type="entry name" value="Cyt_c_II"/>
</dbReference>
<dbReference type="InterPro" id="IPR012127">
    <property type="entry name" value="Cyt_c_prime"/>
</dbReference>
<dbReference type="Pfam" id="PF01322">
    <property type="entry name" value="Cytochrom_C_2"/>
    <property type="match status" value="1"/>
</dbReference>
<dbReference type="PIRSF" id="PIRSF000027">
    <property type="entry name" value="Cytc_c_prime"/>
    <property type="match status" value="1"/>
</dbReference>
<dbReference type="SUPFAM" id="SSF47175">
    <property type="entry name" value="Cytochromes"/>
    <property type="match status" value="1"/>
</dbReference>
<dbReference type="PROSITE" id="PS51009">
    <property type="entry name" value="CYTCII"/>
    <property type="match status" value="1"/>
</dbReference>
<protein>
    <recommendedName>
        <fullName>Cytochrome c'</fullName>
    </recommendedName>
</protein>
<feature type="chain" id="PRO_0000108370" description="Cytochrome c'">
    <location>
        <begin position="1"/>
        <end position="132"/>
    </location>
</feature>
<feature type="binding site" evidence="1">
    <location>
        <position position="10"/>
    </location>
    <ligand>
        <name>heme c</name>
        <dbReference type="ChEBI" id="CHEBI:61717"/>
    </ligand>
</feature>
<feature type="binding site" evidence="1">
    <location>
        <position position="11"/>
    </location>
    <ligand>
        <name>heme c</name>
        <dbReference type="ChEBI" id="CHEBI:61717"/>
    </ligand>
</feature>
<feature type="binding site" evidence="1">
    <location>
        <position position="65"/>
    </location>
    <ligand>
        <name>heme c</name>
        <dbReference type="ChEBI" id="CHEBI:61717"/>
    </ligand>
</feature>
<feature type="binding site" description="covalent" evidence="1">
    <location>
        <position position="122"/>
    </location>
    <ligand>
        <name>heme c</name>
        <dbReference type="ChEBI" id="CHEBI:61717"/>
    </ligand>
</feature>
<feature type="binding site" description="covalent" evidence="1">
    <location>
        <position position="125"/>
    </location>
    <ligand>
        <name>heme c</name>
        <dbReference type="ChEBI" id="CHEBI:61717"/>
    </ligand>
</feature>
<feature type="binding site" description="axial binding residue" evidence="1">
    <location>
        <position position="126"/>
    </location>
    <ligand>
        <name>heme c</name>
        <dbReference type="ChEBI" id="CHEBI:61717"/>
    </ligand>
    <ligandPart>
        <name>Fe</name>
        <dbReference type="ChEBI" id="CHEBI:18248"/>
    </ligandPart>
</feature>
<comment type="function">
    <text>Cytochrome c' is the most widely occurring bacterial c-type cytochrome. Cytochromes c' are high-spin proteins and the heme has no sixth ligand. Their exact function is not known.</text>
</comment>
<comment type="PTM">
    <text evidence="1">Binds 1 heme c group covalently per subunit.</text>
</comment>